<proteinExistence type="evidence at protein level"/>
<gene>
    <name type="primary">DUS2</name>
    <name type="synonym">DUS2L</name>
</gene>
<sequence length="493" mass="55050">MILNSLSLCYHNKLILAPMVRVGTLPMRLLALDYGADIVYCEELIDLKMIQCKRVVNEVLSTVDFVAPDDRVVFRTCEREQNRVVFQMGTSDAERALAVARLVENDVAGIDVNMGCPKQYSTKGGMGAALLSDPDKIEKILSTLVKGTRRPVTCKIRILPSLEDTLSLVKRIERTGIAAIAVHGRKREERPQHPVSCEVIKAIADTLSIPVIANGGSHDHIQQYSDIEDFRQATAASSVMVARAAMWNPSIFLKEGLRPLEEVMQKYIRYAVQYDNHYTNTKYCLCQMLREQLESPQGRLLHAAQSSREICEAFGLGAFYEETTQELDAQQARLSAKTSEQTGEPAEDTSGVIKMAVKFDRRAYPAQITPKMCLLEWCRREKLAQPVYETVQRPLDRLFSSIVTVAEQKYQSTLWDKSKKLAEQAAAIVCLRSQGLPEGRLGEESPSLHKRKREAPDQDPGGPRAQELAQPGDLCKKPFVALGSGEESPLEGW</sequence>
<reference key="1">
    <citation type="journal article" date="2005" name="Cancer Res.">
        <title>A novel human tRNA-dihydrouridine synthase involved in pulmonary carcinogenesis.</title>
        <authorList>
            <person name="Kato T."/>
            <person name="Daigo Y."/>
            <person name="Hayama S."/>
            <person name="Ishikawa N."/>
            <person name="Yamabuki T."/>
            <person name="Ito T."/>
            <person name="Miyamoto M."/>
            <person name="Kondo S."/>
            <person name="Nakamura Y."/>
        </authorList>
    </citation>
    <scope>NUCLEOTIDE SEQUENCE [MRNA]</scope>
    <scope>FUNCTION</scope>
    <scope>CATALYTIC ACTIVITY</scope>
    <scope>SUBCELLULAR LOCATION</scope>
    <scope>TISSUE SPECIFICITY</scope>
    <scope>INTERACTION WITH EPRS1</scope>
</reference>
<reference key="2">
    <citation type="journal article" date="2004" name="Nat. Genet.">
        <title>Complete sequencing and characterization of 21,243 full-length human cDNAs.</title>
        <authorList>
            <person name="Ota T."/>
            <person name="Suzuki Y."/>
            <person name="Nishikawa T."/>
            <person name="Otsuki T."/>
            <person name="Sugiyama T."/>
            <person name="Irie R."/>
            <person name="Wakamatsu A."/>
            <person name="Hayashi K."/>
            <person name="Sato H."/>
            <person name="Nagai K."/>
            <person name="Kimura K."/>
            <person name="Makita H."/>
            <person name="Sekine M."/>
            <person name="Obayashi M."/>
            <person name="Nishi T."/>
            <person name="Shibahara T."/>
            <person name="Tanaka T."/>
            <person name="Ishii S."/>
            <person name="Yamamoto J."/>
            <person name="Saito K."/>
            <person name="Kawai Y."/>
            <person name="Isono Y."/>
            <person name="Nakamura Y."/>
            <person name="Nagahari K."/>
            <person name="Murakami K."/>
            <person name="Yasuda T."/>
            <person name="Iwayanagi T."/>
            <person name="Wagatsuma M."/>
            <person name="Shiratori A."/>
            <person name="Sudo H."/>
            <person name="Hosoiri T."/>
            <person name="Kaku Y."/>
            <person name="Kodaira H."/>
            <person name="Kondo H."/>
            <person name="Sugawara M."/>
            <person name="Takahashi M."/>
            <person name="Kanda K."/>
            <person name="Yokoi T."/>
            <person name="Furuya T."/>
            <person name="Kikkawa E."/>
            <person name="Omura Y."/>
            <person name="Abe K."/>
            <person name="Kamihara K."/>
            <person name="Katsuta N."/>
            <person name="Sato K."/>
            <person name="Tanikawa M."/>
            <person name="Yamazaki M."/>
            <person name="Ninomiya K."/>
            <person name="Ishibashi T."/>
            <person name="Yamashita H."/>
            <person name="Murakawa K."/>
            <person name="Fujimori K."/>
            <person name="Tanai H."/>
            <person name="Kimata M."/>
            <person name="Watanabe M."/>
            <person name="Hiraoka S."/>
            <person name="Chiba Y."/>
            <person name="Ishida S."/>
            <person name="Ono Y."/>
            <person name="Takiguchi S."/>
            <person name="Watanabe S."/>
            <person name="Yosida M."/>
            <person name="Hotuta T."/>
            <person name="Kusano J."/>
            <person name="Kanehori K."/>
            <person name="Takahashi-Fujii A."/>
            <person name="Hara H."/>
            <person name="Tanase T.-O."/>
            <person name="Nomura Y."/>
            <person name="Togiya S."/>
            <person name="Komai F."/>
            <person name="Hara R."/>
            <person name="Takeuchi K."/>
            <person name="Arita M."/>
            <person name="Imose N."/>
            <person name="Musashino K."/>
            <person name="Yuuki H."/>
            <person name="Oshima A."/>
            <person name="Sasaki N."/>
            <person name="Aotsuka S."/>
            <person name="Yoshikawa Y."/>
            <person name="Matsunawa H."/>
            <person name="Ichihara T."/>
            <person name="Shiohata N."/>
            <person name="Sano S."/>
            <person name="Moriya S."/>
            <person name="Momiyama H."/>
            <person name="Satoh N."/>
            <person name="Takami S."/>
            <person name="Terashima Y."/>
            <person name="Suzuki O."/>
            <person name="Nakagawa S."/>
            <person name="Senoh A."/>
            <person name="Mizoguchi H."/>
            <person name="Goto Y."/>
            <person name="Shimizu F."/>
            <person name="Wakebe H."/>
            <person name="Hishigaki H."/>
            <person name="Watanabe T."/>
            <person name="Sugiyama A."/>
            <person name="Takemoto M."/>
            <person name="Kawakami B."/>
            <person name="Yamazaki M."/>
            <person name="Watanabe K."/>
            <person name="Kumagai A."/>
            <person name="Itakura S."/>
            <person name="Fukuzumi Y."/>
            <person name="Fujimori Y."/>
            <person name="Komiyama M."/>
            <person name="Tashiro H."/>
            <person name="Tanigami A."/>
            <person name="Fujiwara T."/>
            <person name="Ono T."/>
            <person name="Yamada K."/>
            <person name="Fujii Y."/>
            <person name="Ozaki K."/>
            <person name="Hirao M."/>
            <person name="Ohmori Y."/>
            <person name="Kawabata A."/>
            <person name="Hikiji T."/>
            <person name="Kobatake N."/>
            <person name="Inagaki H."/>
            <person name="Ikema Y."/>
            <person name="Okamoto S."/>
            <person name="Okitani R."/>
            <person name="Kawakami T."/>
            <person name="Noguchi S."/>
            <person name="Itoh T."/>
            <person name="Shigeta K."/>
            <person name="Senba T."/>
            <person name="Matsumura K."/>
            <person name="Nakajima Y."/>
            <person name="Mizuno T."/>
            <person name="Morinaga M."/>
            <person name="Sasaki M."/>
            <person name="Togashi T."/>
            <person name="Oyama M."/>
            <person name="Hata H."/>
            <person name="Watanabe M."/>
            <person name="Komatsu T."/>
            <person name="Mizushima-Sugano J."/>
            <person name="Satoh T."/>
            <person name="Shirai Y."/>
            <person name="Takahashi Y."/>
            <person name="Nakagawa K."/>
            <person name="Okumura K."/>
            <person name="Nagase T."/>
            <person name="Nomura N."/>
            <person name="Kikuchi H."/>
            <person name="Masuho Y."/>
            <person name="Yamashita R."/>
            <person name="Nakai K."/>
            <person name="Yada T."/>
            <person name="Nakamura Y."/>
            <person name="Ohara O."/>
            <person name="Isogai T."/>
            <person name="Sugano S."/>
        </authorList>
    </citation>
    <scope>NUCLEOTIDE SEQUENCE [LARGE SCALE MRNA]</scope>
    <source>
        <tissue>Gastric carcinoma</tissue>
    </source>
</reference>
<reference key="3">
    <citation type="journal article" date="2004" name="Nature">
        <title>The sequence and analysis of duplication-rich human chromosome 16.</title>
        <authorList>
            <person name="Martin J."/>
            <person name="Han C."/>
            <person name="Gordon L.A."/>
            <person name="Terry A."/>
            <person name="Prabhakar S."/>
            <person name="She X."/>
            <person name="Xie G."/>
            <person name="Hellsten U."/>
            <person name="Chan Y.M."/>
            <person name="Altherr M."/>
            <person name="Couronne O."/>
            <person name="Aerts A."/>
            <person name="Bajorek E."/>
            <person name="Black S."/>
            <person name="Blumer H."/>
            <person name="Branscomb E."/>
            <person name="Brown N.C."/>
            <person name="Bruno W.J."/>
            <person name="Buckingham J.M."/>
            <person name="Callen D.F."/>
            <person name="Campbell C.S."/>
            <person name="Campbell M.L."/>
            <person name="Campbell E.W."/>
            <person name="Caoile C."/>
            <person name="Challacombe J.F."/>
            <person name="Chasteen L.A."/>
            <person name="Chertkov O."/>
            <person name="Chi H.C."/>
            <person name="Christensen M."/>
            <person name="Clark L.M."/>
            <person name="Cohn J.D."/>
            <person name="Denys M."/>
            <person name="Detter J.C."/>
            <person name="Dickson M."/>
            <person name="Dimitrijevic-Bussod M."/>
            <person name="Escobar J."/>
            <person name="Fawcett J.J."/>
            <person name="Flowers D."/>
            <person name="Fotopulos D."/>
            <person name="Glavina T."/>
            <person name="Gomez M."/>
            <person name="Gonzales E."/>
            <person name="Goodstein D."/>
            <person name="Goodwin L.A."/>
            <person name="Grady D.L."/>
            <person name="Grigoriev I."/>
            <person name="Groza M."/>
            <person name="Hammon N."/>
            <person name="Hawkins T."/>
            <person name="Haydu L."/>
            <person name="Hildebrand C.E."/>
            <person name="Huang W."/>
            <person name="Israni S."/>
            <person name="Jett J."/>
            <person name="Jewett P.B."/>
            <person name="Kadner K."/>
            <person name="Kimball H."/>
            <person name="Kobayashi A."/>
            <person name="Krawczyk M.-C."/>
            <person name="Leyba T."/>
            <person name="Longmire J.L."/>
            <person name="Lopez F."/>
            <person name="Lou Y."/>
            <person name="Lowry S."/>
            <person name="Ludeman T."/>
            <person name="Manohar C.F."/>
            <person name="Mark G.A."/>
            <person name="McMurray K.L."/>
            <person name="Meincke L.J."/>
            <person name="Morgan J."/>
            <person name="Moyzis R.K."/>
            <person name="Mundt M.O."/>
            <person name="Munk A.C."/>
            <person name="Nandkeshwar R.D."/>
            <person name="Pitluck S."/>
            <person name="Pollard M."/>
            <person name="Predki P."/>
            <person name="Parson-Quintana B."/>
            <person name="Ramirez L."/>
            <person name="Rash S."/>
            <person name="Retterer J."/>
            <person name="Ricke D.O."/>
            <person name="Robinson D.L."/>
            <person name="Rodriguez A."/>
            <person name="Salamov A."/>
            <person name="Saunders E.H."/>
            <person name="Scott D."/>
            <person name="Shough T."/>
            <person name="Stallings R.L."/>
            <person name="Stalvey M."/>
            <person name="Sutherland R.D."/>
            <person name="Tapia R."/>
            <person name="Tesmer J.G."/>
            <person name="Thayer N."/>
            <person name="Thompson L.S."/>
            <person name="Tice H."/>
            <person name="Torney D.C."/>
            <person name="Tran-Gyamfi M."/>
            <person name="Tsai M."/>
            <person name="Ulanovsky L.E."/>
            <person name="Ustaszewska A."/>
            <person name="Vo N."/>
            <person name="White P.S."/>
            <person name="Williams A.L."/>
            <person name="Wills P.L."/>
            <person name="Wu J.-R."/>
            <person name="Wu K."/>
            <person name="Yang J."/>
            <person name="DeJong P."/>
            <person name="Bruce D."/>
            <person name="Doggett N.A."/>
            <person name="Deaven L."/>
            <person name="Schmutz J."/>
            <person name="Grimwood J."/>
            <person name="Richardson P."/>
            <person name="Rokhsar D.S."/>
            <person name="Eichler E.E."/>
            <person name="Gilna P."/>
            <person name="Lucas S.M."/>
            <person name="Myers R.M."/>
            <person name="Rubin E.M."/>
            <person name="Pennacchio L.A."/>
        </authorList>
    </citation>
    <scope>NUCLEOTIDE SEQUENCE [LARGE SCALE GENOMIC DNA]</scope>
</reference>
<reference key="4">
    <citation type="submission" date="2005-07" db="EMBL/GenBank/DDBJ databases">
        <authorList>
            <person name="Mural R.J."/>
            <person name="Istrail S."/>
            <person name="Sutton G.G."/>
            <person name="Florea L."/>
            <person name="Halpern A.L."/>
            <person name="Mobarry C.M."/>
            <person name="Lippert R."/>
            <person name="Walenz B."/>
            <person name="Shatkay H."/>
            <person name="Dew I."/>
            <person name="Miller J.R."/>
            <person name="Flanigan M.J."/>
            <person name="Edwards N.J."/>
            <person name="Bolanos R."/>
            <person name="Fasulo D."/>
            <person name="Halldorsson B.V."/>
            <person name="Hannenhalli S."/>
            <person name="Turner R."/>
            <person name="Yooseph S."/>
            <person name="Lu F."/>
            <person name="Nusskern D.R."/>
            <person name="Shue B.C."/>
            <person name="Zheng X.H."/>
            <person name="Zhong F."/>
            <person name="Delcher A.L."/>
            <person name="Huson D.H."/>
            <person name="Kravitz S.A."/>
            <person name="Mouchard L."/>
            <person name="Reinert K."/>
            <person name="Remington K.A."/>
            <person name="Clark A.G."/>
            <person name="Waterman M.S."/>
            <person name="Eichler E.E."/>
            <person name="Adams M.D."/>
            <person name="Hunkapiller M.W."/>
            <person name="Myers E.W."/>
            <person name="Venter J.C."/>
        </authorList>
    </citation>
    <scope>NUCLEOTIDE SEQUENCE [LARGE SCALE GENOMIC DNA]</scope>
</reference>
<reference key="5">
    <citation type="journal article" date="2004" name="Genome Res.">
        <title>The status, quality, and expansion of the NIH full-length cDNA project: the Mammalian Gene Collection (MGC).</title>
        <authorList>
            <consortium name="The MGC Project Team"/>
        </authorList>
    </citation>
    <scope>NUCLEOTIDE SEQUENCE [LARGE SCALE MRNA]</scope>
    <source>
        <tissue>Colon</tissue>
    </source>
</reference>
<reference key="6">
    <citation type="journal article" date="2008" name="Nucleic Acids Res.">
        <title>Interaction of human tRNA-dihydrouridine synthase-2 with interferon-induced protein kinase PKR.</title>
        <authorList>
            <person name="Mittelstadt M."/>
            <person name="Frump A."/>
            <person name="Khuu T."/>
            <person name="Fowlkes V."/>
            <person name="Handy I."/>
            <person name="Patel C.V."/>
            <person name="Patel R.C."/>
        </authorList>
    </citation>
    <scope>FUNCTION</scope>
    <scope>INTERACTION WITH PRKRA AND EIF2AK2</scope>
</reference>
<reference key="7">
    <citation type="journal article" date="2008" name="Proc. Natl. Acad. Sci. U.S.A.">
        <title>A quantitative atlas of mitotic phosphorylation.</title>
        <authorList>
            <person name="Dephoure N."/>
            <person name="Zhou C."/>
            <person name="Villen J."/>
            <person name="Beausoleil S.A."/>
            <person name="Bakalarski C.E."/>
            <person name="Elledge S.J."/>
            <person name="Gygi S.P."/>
        </authorList>
    </citation>
    <scope>PHOSPHORYLATION [LARGE SCALE ANALYSIS] AT SER-488</scope>
    <scope>IDENTIFICATION BY MASS SPECTROMETRY [LARGE SCALE ANALYSIS]</scope>
    <source>
        <tissue>Cervix carcinoma</tissue>
    </source>
</reference>
<reference key="8">
    <citation type="journal article" date="2009" name="Anal. Chem.">
        <title>Lys-N and trypsin cover complementary parts of the phosphoproteome in a refined SCX-based approach.</title>
        <authorList>
            <person name="Gauci S."/>
            <person name="Helbig A.O."/>
            <person name="Slijper M."/>
            <person name="Krijgsveld J."/>
            <person name="Heck A.J."/>
            <person name="Mohammed S."/>
        </authorList>
    </citation>
    <scope>IDENTIFICATION BY MASS SPECTROMETRY [LARGE SCALE ANALYSIS]</scope>
</reference>
<reference key="9">
    <citation type="journal article" date="2010" name="Sci. Signal.">
        <title>Quantitative phosphoproteomics reveals widespread full phosphorylation site occupancy during mitosis.</title>
        <authorList>
            <person name="Olsen J.V."/>
            <person name="Vermeulen M."/>
            <person name="Santamaria A."/>
            <person name="Kumar C."/>
            <person name="Miller M.L."/>
            <person name="Jensen L.J."/>
            <person name="Gnad F."/>
            <person name="Cox J."/>
            <person name="Jensen T.S."/>
            <person name="Nigg E.A."/>
            <person name="Brunak S."/>
            <person name="Mann M."/>
        </authorList>
    </citation>
    <scope>PHOSPHORYLATION [LARGE SCALE ANALYSIS] AT SER-488</scope>
    <scope>IDENTIFICATION BY MASS SPECTROMETRY [LARGE SCALE ANALYSIS]</scope>
    <source>
        <tissue>Cervix carcinoma</tissue>
    </source>
</reference>
<reference key="10">
    <citation type="journal article" date="2011" name="BMC Syst. Biol.">
        <title>Initial characterization of the human central proteome.</title>
        <authorList>
            <person name="Burkard T.R."/>
            <person name="Planyavsky M."/>
            <person name="Kaupe I."/>
            <person name="Breitwieser F.P."/>
            <person name="Buerckstuemmer T."/>
            <person name="Bennett K.L."/>
            <person name="Superti-Furga G."/>
            <person name="Colinge J."/>
        </authorList>
    </citation>
    <scope>IDENTIFICATION BY MASS SPECTROMETRY [LARGE SCALE ANALYSIS]</scope>
</reference>
<reference key="11">
    <citation type="journal article" date="2013" name="J. Proteome Res.">
        <title>Toward a comprehensive characterization of a human cancer cell phosphoproteome.</title>
        <authorList>
            <person name="Zhou H."/>
            <person name="Di Palma S."/>
            <person name="Preisinger C."/>
            <person name="Peng M."/>
            <person name="Polat A.N."/>
            <person name="Heck A.J."/>
            <person name="Mohammed S."/>
        </authorList>
    </citation>
    <scope>PHOSPHORYLATION [LARGE SCALE ANALYSIS] AT SER-445 AND SER-488</scope>
    <scope>IDENTIFICATION BY MASS SPECTROMETRY [LARGE SCALE ANALYSIS]</scope>
    <source>
        <tissue>Cervix carcinoma</tissue>
        <tissue>Erythroleukemia</tissue>
    </source>
</reference>
<reference key="12">
    <citation type="journal article" date="2021" name="Mol. Cell">
        <title>Transcription-wide mapping of dihydrouridine reveals that mRNA dihydrouridylation is required for meiotic chromosome segregation.</title>
        <authorList>
            <person name="Finet O."/>
            <person name="Yague-Sanz C."/>
            <person name="Krueger L.K."/>
            <person name="Tran P."/>
            <person name="Migeot V."/>
            <person name="Louski M."/>
            <person name="Nevers A."/>
            <person name="Rougemaille M."/>
            <person name="Sun J."/>
            <person name="Ernst F.G.M."/>
            <person name="Wacheul L."/>
            <person name="Wery M."/>
            <person name="Morillon A."/>
            <person name="Dedon P."/>
            <person name="Lafontaine D.L.J."/>
            <person name="Hermand D."/>
        </authorList>
    </citation>
    <scope>FUNCTION</scope>
    <scope>CATALYTIC ACTIVITY</scope>
</reference>
<reference key="13">
    <citation type="journal article" date="2024" name="ACS Cent. Sci.">
        <title>Sequence- and Structure-Specific tRNA Dihydrouridylation by hDUS2.</title>
        <authorList>
            <person name="Ji J."/>
            <person name="Yu N.J."/>
            <person name="Kleiner R.E."/>
        </authorList>
    </citation>
    <scope>FUNCTION</scope>
    <scope>CATALYTIC ACTIVITY</scope>
    <scope>ACTIVITY REGULATION</scope>
    <scope>ACTIVE SITE</scope>
</reference>
<reference evidence="16" key="14">
    <citation type="journal article" date="2015" name="Acta Crystallogr. D">
        <title>From bacterial to human dihydrouridine synthase: automated structure determination.</title>
        <authorList>
            <person name="Whelan F."/>
            <person name="Jenkins H.T."/>
            <person name="Griffiths S.C."/>
            <person name="Byrne R.T."/>
            <person name="Dodson E.J."/>
            <person name="Antson A.A."/>
        </authorList>
    </citation>
    <scope>X-RAY CRYSTALLOGRAPHY (1.90 ANGSTROMS) OF 1-340 IN COMPLEX WITH FMN</scope>
    <scope>COFACTOR</scope>
</reference>
<reference evidence="14 15" key="15">
    <citation type="journal article" date="2015" name="Nucleic Acids Res.">
        <title>An extended dsRBD is required for post-transcriptional modification in human tRNAs.</title>
        <authorList>
            <person name="Bou-Nader C."/>
            <person name="Pecqueur L."/>
            <person name="Bregeon D."/>
            <person name="Kamah A."/>
            <person name="Guerineau V."/>
            <person name="Golinelli-Pimpaneau B."/>
            <person name="Guimaraes B.G."/>
            <person name="Fontecave M."/>
            <person name="Hamdane D."/>
        </authorList>
    </citation>
    <scope>X-RAY CRYSTALLOGRAPHY (1.70 ANGSTROMS) OF 338-450 IN COMPLEX WITH FMN</scope>
    <scope>FUNCTION</scope>
    <scope>CATALYTIC ACTIVITY</scope>
    <scope>COFACTOR</scope>
    <scope>DOMAIN</scope>
</reference>
<reference evidence="20 21 22" key="16">
    <citation type="journal article" date="2018" name="Biochemistry">
        <title>Electrostatic Potential in the tRNA Binding Evolution of Dihydrouridine Synthases.</title>
        <authorList>
            <person name="Bou-Nader C."/>
            <person name="Bregeon D."/>
            <person name="Pecqueur L."/>
            <person name="Fontecave M."/>
            <person name="Hamdane D."/>
        </authorList>
    </citation>
    <scope>X-RAY CRYSTALLOGRAPHY (2.00 ANGSTROMS) OF 14-333 OF MUTANTS LYS-294 AND LYS-305 IN COMPLEX WITH FMN</scope>
    <scope>FUNCTION</scope>
    <scope>CATALYTIC ACTIVITY</scope>
    <scope>COFACTOR</scope>
    <scope>DOMAIN</scope>
    <scope>MUTAGENESIS OF GLU-294 AND GLN-305</scope>
</reference>
<reference evidence="17 18 19" key="17">
    <citation type="journal article" date="2019" name="Nucleic Acids Res.">
        <title>Molecular basis for transfer RNA recognition by the double-stranded RNA-binding domain of human dihydrouridine synthase 2.</title>
        <authorList>
            <person name="Bou-Nader C."/>
            <person name="Barraud P."/>
            <person name="Pecqueur L."/>
            <person name="Perez J."/>
            <person name="Velours C."/>
            <person name="Shepard W."/>
            <person name="Fontecave M."/>
            <person name="Tisne C."/>
            <person name="Hamdane D."/>
        </authorList>
    </citation>
    <scope>X-RAY CRYSTALLOGRAPHY (1.71 ANGSTROMS) OF 338-450 IN COMPLEX WITH DOUBLE-STRANDED RNA</scope>
    <scope>MUTAGENESIS OF 361-ARG-ARG-362; GLN-367; LYS-371; MET-372; ARG-379; ARG-397; LYS-417; LYS-419 AND LYS-420</scope>
</reference>
<comment type="function">
    <text evidence="2 3 5 6 8 9">Catalyzes the NADPH-dependent synthesis of dihydrouridine, a modified base found in the D-loop of most tRNAs (PubMed:15994936, PubMed:26429968, PubMed:30149704, PubMed:34798057, PubMed:38680565). Specifically modifies U20 in cytoplasmic tRNAs (PubMed:38680565). Activity depends on the presence of guanosine at position 19 in the tRNA substrate (PubMed:38680565). Negatively regulates the activation of EIF2AK2/PKR (PubMed:18096616).</text>
</comment>
<comment type="catalytic activity">
    <reaction evidence="5 6 9 12">
        <text>5,6-dihydrouridine(20) in tRNA + NADP(+) = uridine(20) in tRNA + NADPH + H(+)</text>
        <dbReference type="Rhea" id="RHEA:53336"/>
        <dbReference type="Rhea" id="RHEA-COMP:13533"/>
        <dbReference type="Rhea" id="RHEA-COMP:13534"/>
        <dbReference type="ChEBI" id="CHEBI:15378"/>
        <dbReference type="ChEBI" id="CHEBI:57783"/>
        <dbReference type="ChEBI" id="CHEBI:58349"/>
        <dbReference type="ChEBI" id="CHEBI:65315"/>
        <dbReference type="ChEBI" id="CHEBI:74443"/>
        <dbReference type="EC" id="1.3.1.91"/>
    </reaction>
    <physiologicalReaction direction="right-to-left" evidence="5 6 9 12">
        <dbReference type="Rhea" id="RHEA:53338"/>
    </physiologicalReaction>
</comment>
<comment type="cofactor">
    <cofactor evidence="4 5 6">
        <name>FMN</name>
        <dbReference type="ChEBI" id="CHEBI:58210"/>
    </cofactor>
</comment>
<comment type="activity regulation">
    <text evidence="9">Inhibited by canertinib, PD 168393, AST-1306 and PF-6274484.</text>
</comment>
<comment type="subunit">
    <text evidence="2 3">Interacts with EPRS1. Interacts (via DRBM domain) with PRKRA and EIF2AK2/PKR (via DRBM 1 domain).</text>
</comment>
<comment type="subcellular location">
    <subcellularLocation>
        <location evidence="2">Cytoplasm</location>
    </subcellularLocation>
    <subcellularLocation>
        <location evidence="2">Endoplasmic reticulum</location>
    </subcellularLocation>
    <text evidence="2">Mainly at the endoplasmic reticulum.</text>
</comment>
<comment type="tissue specificity">
    <text evidence="2">Weak expression in heart, placenta and skeletal muscle. Up-regulated in most lung cancer cells (at protein level).</text>
</comment>
<comment type="domain">
    <text evidence="5">Efficient dihydrouridine synthesis requires the presence of both the catalytic domain and the C-terminal RNA-binding DRBM domain.</text>
</comment>
<comment type="similarity">
    <text evidence="11">Belongs to the Dus family. Dus2 subfamily.</text>
</comment>
<dbReference type="EC" id="1.3.1.91" evidence="2 5 6 9 12"/>
<dbReference type="EMBL" id="AB101210">
    <property type="protein sequence ID" value="BAE07219.1"/>
    <property type="molecule type" value="mRNA"/>
</dbReference>
<dbReference type="EMBL" id="AK000406">
    <property type="protein sequence ID" value="BAA91143.1"/>
    <property type="molecule type" value="mRNA"/>
</dbReference>
<dbReference type="EMBL" id="AK290578">
    <property type="protein sequence ID" value="BAF83267.1"/>
    <property type="molecule type" value="mRNA"/>
</dbReference>
<dbReference type="EMBL" id="AC130462">
    <property type="status" value="NOT_ANNOTATED_CDS"/>
    <property type="molecule type" value="Genomic_DNA"/>
</dbReference>
<dbReference type="EMBL" id="CH471092">
    <property type="protein sequence ID" value="EAW83207.1"/>
    <property type="molecule type" value="Genomic_DNA"/>
</dbReference>
<dbReference type="EMBL" id="BC006527">
    <property type="protein sequence ID" value="AAH06527.1"/>
    <property type="molecule type" value="mRNA"/>
</dbReference>
<dbReference type="CCDS" id="CCDS10859.1"/>
<dbReference type="RefSeq" id="NP_001258691.1">
    <property type="nucleotide sequence ID" value="NM_001271762.2"/>
</dbReference>
<dbReference type="RefSeq" id="NP_001258692.1">
    <property type="nucleotide sequence ID" value="NM_001271763.1"/>
</dbReference>
<dbReference type="RefSeq" id="NP_060273.1">
    <property type="nucleotide sequence ID" value="NM_017803.5"/>
</dbReference>
<dbReference type="PDB" id="4WFS">
    <property type="method" value="X-ray"/>
    <property type="resolution" value="2.68 A"/>
    <property type="chains" value="A=14-333"/>
</dbReference>
<dbReference type="PDB" id="4WFT">
    <property type="method" value="X-ray"/>
    <property type="resolution" value="1.70 A"/>
    <property type="chains" value="A/B/C=338-450"/>
</dbReference>
<dbReference type="PDB" id="4XP7">
    <property type="method" value="X-ray"/>
    <property type="resolution" value="1.90 A"/>
    <property type="chains" value="A=1-340"/>
</dbReference>
<dbReference type="PDB" id="5OC4">
    <property type="method" value="X-ray"/>
    <property type="resolution" value="1.71 A"/>
    <property type="chains" value="A=338-450"/>
</dbReference>
<dbReference type="PDB" id="5OC5">
    <property type="method" value="X-ray"/>
    <property type="resolution" value="1.89 A"/>
    <property type="chains" value="A=338-450"/>
</dbReference>
<dbReference type="PDB" id="5OC6">
    <property type="method" value="X-ray"/>
    <property type="resolution" value="3.20 A"/>
    <property type="chains" value="A=338-450"/>
</dbReference>
<dbReference type="PDB" id="6EI8">
    <property type="method" value="X-ray"/>
    <property type="resolution" value="2.25 A"/>
    <property type="chains" value="A=338-450"/>
</dbReference>
<dbReference type="PDB" id="6EZA">
    <property type="method" value="X-ray"/>
    <property type="resolution" value="2.00 A"/>
    <property type="chains" value="A/B=14-333"/>
</dbReference>
<dbReference type="PDB" id="6EZB">
    <property type="method" value="X-ray"/>
    <property type="resolution" value="2.25 A"/>
    <property type="chains" value="A=14-333"/>
</dbReference>
<dbReference type="PDB" id="6EZC">
    <property type="method" value="X-ray"/>
    <property type="resolution" value="2.00 A"/>
    <property type="chains" value="A=14-333"/>
</dbReference>
<dbReference type="PDB" id="6F00">
    <property type="method" value="X-ray"/>
    <property type="resolution" value="2.16 A"/>
    <property type="chains" value="A/B/C=338-450"/>
</dbReference>
<dbReference type="PDBsum" id="4WFS"/>
<dbReference type="PDBsum" id="4WFT"/>
<dbReference type="PDBsum" id="4XP7"/>
<dbReference type="PDBsum" id="5OC4"/>
<dbReference type="PDBsum" id="5OC5"/>
<dbReference type="PDBsum" id="5OC6"/>
<dbReference type="PDBsum" id="6EI8"/>
<dbReference type="PDBsum" id="6EZA"/>
<dbReference type="PDBsum" id="6EZB"/>
<dbReference type="PDBsum" id="6EZC"/>
<dbReference type="PDBsum" id="6F00"/>
<dbReference type="SMR" id="Q9NX74"/>
<dbReference type="BioGRID" id="120261">
    <property type="interactions" value="19"/>
</dbReference>
<dbReference type="FunCoup" id="Q9NX74">
    <property type="interactions" value="1580"/>
</dbReference>
<dbReference type="IntAct" id="Q9NX74">
    <property type="interactions" value="13"/>
</dbReference>
<dbReference type="MINT" id="Q9NX74"/>
<dbReference type="STRING" id="9606.ENSP00000455229"/>
<dbReference type="BindingDB" id="Q9NX74"/>
<dbReference type="ChEMBL" id="CHEMBL3879825"/>
<dbReference type="iPTMnet" id="Q9NX74"/>
<dbReference type="MetOSite" id="Q9NX74"/>
<dbReference type="PhosphoSitePlus" id="Q9NX74"/>
<dbReference type="BioMuta" id="DUS2"/>
<dbReference type="DMDM" id="73620832"/>
<dbReference type="jPOST" id="Q9NX74"/>
<dbReference type="MassIVE" id="Q9NX74"/>
<dbReference type="PaxDb" id="9606-ENSP00000455229"/>
<dbReference type="PeptideAtlas" id="Q9NX74"/>
<dbReference type="ProteomicsDB" id="83051"/>
<dbReference type="Pumba" id="Q9NX74"/>
<dbReference type="Antibodypedia" id="50008">
    <property type="antibodies" value="138 antibodies from 24 providers"/>
</dbReference>
<dbReference type="DNASU" id="54920"/>
<dbReference type="Ensembl" id="ENST00000358896.10">
    <property type="protein sequence ID" value="ENSP00000351769.6"/>
    <property type="gene ID" value="ENSG00000167264.18"/>
</dbReference>
<dbReference type="Ensembl" id="ENST00000565263.6">
    <property type="protein sequence ID" value="ENSP00000455229.1"/>
    <property type="gene ID" value="ENSG00000167264.18"/>
</dbReference>
<dbReference type="GeneID" id="54920"/>
<dbReference type="KEGG" id="hsa:54920"/>
<dbReference type="MANE-Select" id="ENST00000565263.6">
    <property type="protein sequence ID" value="ENSP00000455229.1"/>
    <property type="RefSeq nucleotide sequence ID" value="NM_017803.5"/>
    <property type="RefSeq protein sequence ID" value="NP_060273.1"/>
</dbReference>
<dbReference type="UCSC" id="uc002evi.5">
    <property type="organism name" value="human"/>
</dbReference>
<dbReference type="AGR" id="HGNC:26014"/>
<dbReference type="CTD" id="54920"/>
<dbReference type="DisGeNET" id="54920"/>
<dbReference type="GeneCards" id="DUS2"/>
<dbReference type="HGNC" id="HGNC:26014">
    <property type="gene designation" value="DUS2"/>
</dbReference>
<dbReference type="HPA" id="ENSG00000167264">
    <property type="expression patterns" value="Low tissue specificity"/>
</dbReference>
<dbReference type="MIM" id="609707">
    <property type="type" value="gene"/>
</dbReference>
<dbReference type="neXtProt" id="NX_Q9NX74"/>
<dbReference type="OpenTargets" id="ENSG00000167264"/>
<dbReference type="PharmGKB" id="PA142671937"/>
<dbReference type="VEuPathDB" id="HostDB:ENSG00000167264"/>
<dbReference type="eggNOG" id="KOG2334">
    <property type="taxonomic scope" value="Eukaryota"/>
</dbReference>
<dbReference type="GeneTree" id="ENSGT00550000075019"/>
<dbReference type="InParanoid" id="Q9NX74"/>
<dbReference type="OMA" id="GPIRTNS"/>
<dbReference type="OrthoDB" id="10262250at2759"/>
<dbReference type="PAN-GO" id="Q9NX74">
    <property type="GO annotations" value="3 GO annotations based on evolutionary models"/>
</dbReference>
<dbReference type="PhylomeDB" id="Q9NX74"/>
<dbReference type="TreeFam" id="TF106151"/>
<dbReference type="BRENDA" id="1.3.1.91">
    <property type="organism ID" value="2681"/>
</dbReference>
<dbReference type="PathwayCommons" id="Q9NX74"/>
<dbReference type="Reactome" id="R-HSA-6782315">
    <property type="pathway name" value="tRNA modification in the nucleus and cytosol"/>
</dbReference>
<dbReference type="Reactome" id="R-HSA-9833482">
    <property type="pathway name" value="PKR-mediated signaling"/>
</dbReference>
<dbReference type="SignaLink" id="Q9NX74"/>
<dbReference type="BioGRID-ORCS" id="54920">
    <property type="hits" value="18 hits in 1146 CRISPR screens"/>
</dbReference>
<dbReference type="ChiTaRS" id="DUS2">
    <property type="organism name" value="human"/>
</dbReference>
<dbReference type="EvolutionaryTrace" id="Q9NX74"/>
<dbReference type="GenomeRNAi" id="54920"/>
<dbReference type="Pharos" id="Q9NX74">
    <property type="development level" value="Tbio"/>
</dbReference>
<dbReference type="PRO" id="PR:Q9NX74"/>
<dbReference type="Proteomes" id="UP000005640">
    <property type="component" value="Chromosome 16"/>
</dbReference>
<dbReference type="RNAct" id="Q9NX74">
    <property type="molecule type" value="protein"/>
</dbReference>
<dbReference type="Bgee" id="ENSG00000167264">
    <property type="expression patterns" value="Expressed in granulocyte and 164 other cell types or tissues"/>
</dbReference>
<dbReference type="ExpressionAtlas" id="Q9NX74">
    <property type="expression patterns" value="baseline and differential"/>
</dbReference>
<dbReference type="GO" id="GO:0005737">
    <property type="term" value="C:cytoplasm"/>
    <property type="evidence" value="ECO:0000318"/>
    <property type="project" value="GO_Central"/>
</dbReference>
<dbReference type="GO" id="GO:0005829">
    <property type="term" value="C:cytosol"/>
    <property type="evidence" value="ECO:0000314"/>
    <property type="project" value="HPA"/>
</dbReference>
<dbReference type="GO" id="GO:0005783">
    <property type="term" value="C:endoplasmic reticulum"/>
    <property type="evidence" value="ECO:0007669"/>
    <property type="project" value="UniProtKB-SubCell"/>
</dbReference>
<dbReference type="GO" id="GO:0005739">
    <property type="term" value="C:mitochondrion"/>
    <property type="evidence" value="ECO:0006056"/>
    <property type="project" value="FlyBase"/>
</dbReference>
<dbReference type="GO" id="GO:0003725">
    <property type="term" value="F:double-stranded RNA binding"/>
    <property type="evidence" value="ECO:0000314"/>
    <property type="project" value="UniProtKB"/>
</dbReference>
<dbReference type="GO" id="GO:0050660">
    <property type="term" value="F:flavin adenine dinucleotide binding"/>
    <property type="evidence" value="ECO:0007669"/>
    <property type="project" value="InterPro"/>
</dbReference>
<dbReference type="GO" id="GO:0010181">
    <property type="term" value="F:FMN binding"/>
    <property type="evidence" value="ECO:0000314"/>
    <property type="project" value="UniProtKB"/>
</dbReference>
<dbReference type="GO" id="GO:0070402">
    <property type="term" value="F:NADPH binding"/>
    <property type="evidence" value="ECO:0000314"/>
    <property type="project" value="UniProtKB"/>
</dbReference>
<dbReference type="GO" id="GO:0004860">
    <property type="term" value="F:protein kinase inhibitor activity"/>
    <property type="evidence" value="ECO:0000314"/>
    <property type="project" value="UniProtKB"/>
</dbReference>
<dbReference type="GO" id="GO:0000049">
    <property type="term" value="F:tRNA binding"/>
    <property type="evidence" value="ECO:0007669"/>
    <property type="project" value="InterPro"/>
</dbReference>
<dbReference type="GO" id="GO:0017150">
    <property type="term" value="F:tRNA dihydrouridine synthase activity"/>
    <property type="evidence" value="ECO:0000314"/>
    <property type="project" value="UniProtKB"/>
</dbReference>
<dbReference type="GO" id="GO:0102264">
    <property type="term" value="F:tRNA-dihydrouridine20 synthase activity"/>
    <property type="evidence" value="ECO:0000314"/>
    <property type="project" value="UniProtKB"/>
</dbReference>
<dbReference type="GO" id="GO:0140374">
    <property type="term" value="P:antiviral innate immune response"/>
    <property type="evidence" value="ECO:0000353"/>
    <property type="project" value="UniProtKB"/>
</dbReference>
<dbReference type="GO" id="GO:0002943">
    <property type="term" value="P:tRNA dihydrouridine synthesis"/>
    <property type="evidence" value="ECO:0000314"/>
    <property type="project" value="UniProtKB"/>
</dbReference>
<dbReference type="CDD" id="cd19871">
    <property type="entry name" value="DSRM_DUS2L"/>
    <property type="match status" value="1"/>
</dbReference>
<dbReference type="CDD" id="cd02801">
    <property type="entry name" value="DUS_like_FMN"/>
    <property type="match status" value="1"/>
</dbReference>
<dbReference type="FunFam" id="3.20.20.70:FF:000148">
    <property type="entry name" value="tRNA-dihydrouridine(20) synthase [NAD(P)+]-like isoform X1"/>
    <property type="match status" value="1"/>
</dbReference>
<dbReference type="FunFam" id="3.30.160.20:FF:000041">
    <property type="entry name" value="tRNA-dihydrouridine(20) synthase [NAD(P)+]-like isoform X1"/>
    <property type="match status" value="1"/>
</dbReference>
<dbReference type="Gene3D" id="3.30.160.20">
    <property type="match status" value="1"/>
</dbReference>
<dbReference type="Gene3D" id="3.20.20.70">
    <property type="entry name" value="Aldolase class I"/>
    <property type="match status" value="1"/>
</dbReference>
<dbReference type="InterPro" id="IPR013785">
    <property type="entry name" value="Aldolase_TIM"/>
</dbReference>
<dbReference type="InterPro" id="IPR014720">
    <property type="entry name" value="dsRBD_dom"/>
</dbReference>
<dbReference type="InterPro" id="IPR035587">
    <property type="entry name" value="DUS-like_FMN-bd"/>
</dbReference>
<dbReference type="InterPro" id="IPR044463">
    <property type="entry name" value="DUS2_DSRM"/>
</dbReference>
<dbReference type="InterPro" id="IPR052582">
    <property type="entry name" value="tRNA-DUS-like"/>
</dbReference>
<dbReference type="InterPro" id="IPR018517">
    <property type="entry name" value="tRNA_hU_synthase_CS"/>
</dbReference>
<dbReference type="PANTHER" id="PTHR45936">
    <property type="entry name" value="TRNA-DIHYDROURIDINE(20) SYNTHASE [NAD(P)+]-LIKE"/>
    <property type="match status" value="1"/>
</dbReference>
<dbReference type="PANTHER" id="PTHR45936:SF1">
    <property type="entry name" value="TRNA-DIHYDROURIDINE(20) SYNTHASE [NAD(P)+]-LIKE"/>
    <property type="match status" value="1"/>
</dbReference>
<dbReference type="Pfam" id="PF00035">
    <property type="entry name" value="dsrm"/>
    <property type="match status" value="1"/>
</dbReference>
<dbReference type="Pfam" id="PF01207">
    <property type="entry name" value="Dus"/>
    <property type="match status" value="1"/>
</dbReference>
<dbReference type="SMART" id="SM00358">
    <property type="entry name" value="DSRM"/>
    <property type="match status" value="1"/>
</dbReference>
<dbReference type="SUPFAM" id="SSF54768">
    <property type="entry name" value="dsRNA-binding domain-like"/>
    <property type="match status" value="1"/>
</dbReference>
<dbReference type="SUPFAM" id="SSF51395">
    <property type="entry name" value="FMN-linked oxidoreductases"/>
    <property type="match status" value="1"/>
</dbReference>
<dbReference type="PROSITE" id="PS01136">
    <property type="entry name" value="UPF0034"/>
    <property type="match status" value="1"/>
</dbReference>
<feature type="chain" id="PRO_0000162157" description="tRNA-dihydrouridine(20) synthase [NAD(P)+]-like">
    <location>
        <begin position="1"/>
        <end position="493"/>
    </location>
</feature>
<feature type="domain" description="DRBM" evidence="5">
    <location>
        <begin position="369"/>
        <end position="436"/>
    </location>
</feature>
<feature type="region of interest" description="Catalytic domain" evidence="5">
    <location>
        <begin position="1"/>
        <end position="333"/>
    </location>
</feature>
<feature type="region of interest" description="Disordered" evidence="1">
    <location>
        <begin position="330"/>
        <end position="349"/>
    </location>
</feature>
<feature type="region of interest" description="Interaction with tRNA" evidence="7 13">
    <location>
        <begin position="367"/>
        <end position="371"/>
    </location>
</feature>
<feature type="region of interest" description="Interaction with tRNA" evidence="7 13">
    <location>
        <begin position="420"/>
        <end position="424"/>
    </location>
</feature>
<feature type="region of interest" description="Disordered" evidence="1">
    <location>
        <begin position="438"/>
        <end position="493"/>
    </location>
</feature>
<feature type="compositionally biased region" description="Polar residues" evidence="1">
    <location>
        <begin position="330"/>
        <end position="342"/>
    </location>
</feature>
<feature type="active site" description="Proton donor" evidence="9">
    <location>
        <position position="116"/>
    </location>
</feature>
<feature type="binding site" evidence="4 5 14 16">
    <location>
        <begin position="18"/>
        <end position="20"/>
    </location>
    <ligand>
        <name>FMN</name>
        <dbReference type="ChEBI" id="CHEBI:58210"/>
    </ligand>
</feature>
<feature type="binding site" evidence="4 5 14 16">
    <location>
        <position position="43"/>
    </location>
    <ligand>
        <name>FMN</name>
        <dbReference type="ChEBI" id="CHEBI:58210"/>
    </ligand>
</feature>
<feature type="binding site" evidence="4 5 14 16">
    <location>
        <position position="87"/>
    </location>
    <ligand>
        <name>FMN</name>
        <dbReference type="ChEBI" id="CHEBI:58210"/>
    </ligand>
</feature>
<feature type="binding site" evidence="4 5 14 16">
    <location>
        <position position="155"/>
    </location>
    <ligand>
        <name>FMN</name>
        <dbReference type="ChEBI" id="CHEBI:58210"/>
    </ligand>
</feature>
<feature type="binding site" evidence="5 14">
    <location>
        <position position="183"/>
    </location>
    <ligand>
        <name>FMN</name>
        <dbReference type="ChEBI" id="CHEBI:58210"/>
    </ligand>
</feature>
<feature type="binding site" evidence="4 5 14 16">
    <location>
        <begin position="214"/>
        <end position="216"/>
    </location>
    <ligand>
        <name>FMN</name>
        <dbReference type="ChEBI" id="CHEBI:58210"/>
    </ligand>
</feature>
<feature type="binding site" evidence="4 5 14 16">
    <location>
        <begin position="242"/>
        <end position="243"/>
    </location>
    <ligand>
        <name>FMN</name>
        <dbReference type="ChEBI" id="CHEBI:58210"/>
    </ligand>
</feature>
<feature type="modified residue" description="Phosphoserine" evidence="25">
    <location>
        <position position="445"/>
    </location>
</feature>
<feature type="modified residue" description="Phosphoserine" evidence="23 24 25">
    <location>
        <position position="488"/>
    </location>
</feature>
<feature type="mutagenesis site" description="Increased affinity for tRNA and increased dihydrouridine synthesis; when associated with K-305." evidence="6">
    <original>E</original>
    <variation>K</variation>
    <location>
        <position position="294"/>
    </location>
</feature>
<feature type="mutagenesis site" description="Increased affinity for tRNA and increased dihydrouridine synthesis; when associated with K-294." evidence="6">
    <original>Q</original>
    <variation>K</variation>
    <location>
        <position position="305"/>
    </location>
</feature>
<feature type="mutagenesis site" description="Decreased affinity for tRNA." evidence="7">
    <original>RR</original>
    <variation>AA</variation>
    <location>
        <begin position="361"/>
        <end position="362"/>
    </location>
</feature>
<feature type="mutagenesis site" description="Mildly decreased affinity for tRNA." evidence="7">
    <original>Q</original>
    <variation>A</variation>
    <location>
        <position position="367"/>
    </location>
</feature>
<feature type="mutagenesis site" description="Strongly decreased affinity for tRNA." evidence="7">
    <original>K</original>
    <variation>A</variation>
    <location>
        <position position="371"/>
    </location>
</feature>
<feature type="mutagenesis site" description="Mildly decreased affinity for tRNA." evidence="7">
    <original>M</original>
    <variation>A</variation>
    <location>
        <position position="372"/>
    </location>
</feature>
<feature type="mutagenesis site" description="Mildly decreased affinity for tRNA." evidence="7">
    <original>R</original>
    <variation>A</variation>
    <location>
        <position position="379"/>
    </location>
</feature>
<feature type="mutagenesis site" description="Mildly decreased affinity for tRNA." evidence="7">
    <original>R</original>
    <variation>A</variation>
    <location>
        <position position="397"/>
    </location>
</feature>
<feature type="mutagenesis site" description="Mildly decreased affinity for tRNA." evidence="7">
    <original>K</original>
    <variation>A</variation>
    <location>
        <position position="417"/>
    </location>
</feature>
<feature type="mutagenesis site" description="Decreased affinity for tRNA. Strongly decreased affinity for tRNA; when associated with A-420." evidence="7">
    <original>K</original>
    <variation>A</variation>
    <location>
        <position position="419"/>
    </location>
</feature>
<feature type="mutagenesis site" description="Decreased affinity for tRNA. Strongly decreased affinity for tRNA; when associated with A-419." evidence="7">
    <original>K</original>
    <variation>A</variation>
    <location>
        <position position="420"/>
    </location>
</feature>
<feature type="strand" evidence="27">
    <location>
        <begin position="14"/>
        <end position="16"/>
    </location>
</feature>
<feature type="turn" evidence="27">
    <location>
        <begin position="20"/>
        <end position="23"/>
    </location>
</feature>
<feature type="helix" evidence="27">
    <location>
        <begin position="25"/>
        <end position="33"/>
    </location>
</feature>
<feature type="strand" evidence="27">
    <location>
        <begin position="37"/>
        <end position="40"/>
    </location>
</feature>
<feature type="helix" evidence="27">
    <location>
        <begin position="46"/>
        <end position="49"/>
    </location>
</feature>
<feature type="strand" evidence="27">
    <location>
        <begin position="53"/>
        <end position="57"/>
    </location>
</feature>
<feature type="turn" evidence="27">
    <location>
        <begin position="58"/>
        <end position="61"/>
    </location>
</feature>
<feature type="strand" evidence="27">
    <location>
        <begin position="62"/>
        <end position="66"/>
    </location>
</feature>
<feature type="strand" evidence="27">
    <location>
        <begin position="72"/>
        <end position="76"/>
    </location>
</feature>
<feature type="helix" evidence="27">
    <location>
        <begin position="78"/>
        <end position="80"/>
    </location>
</feature>
<feature type="turn" evidence="27">
    <location>
        <begin position="81"/>
        <end position="83"/>
    </location>
</feature>
<feature type="strand" evidence="27">
    <location>
        <begin position="84"/>
        <end position="89"/>
    </location>
</feature>
<feature type="helix" evidence="27">
    <location>
        <begin position="93"/>
        <end position="103"/>
    </location>
</feature>
<feature type="helix" evidence="27">
    <location>
        <begin position="104"/>
        <end position="106"/>
    </location>
</feature>
<feature type="strand" evidence="27">
    <location>
        <begin position="108"/>
        <end position="113"/>
    </location>
</feature>
<feature type="helix" evidence="27">
    <location>
        <begin position="130"/>
        <end position="132"/>
    </location>
</feature>
<feature type="helix" evidence="27">
    <location>
        <begin position="134"/>
        <end position="147"/>
    </location>
</feature>
<feature type="strand" evidence="27">
    <location>
        <begin position="152"/>
        <end position="158"/>
    </location>
</feature>
<feature type="helix" evidence="27">
    <location>
        <begin position="162"/>
        <end position="173"/>
    </location>
</feature>
<feature type="turn" evidence="27">
    <location>
        <begin position="174"/>
        <end position="176"/>
    </location>
</feature>
<feature type="strand" evidence="27">
    <location>
        <begin position="178"/>
        <end position="186"/>
    </location>
</feature>
<feature type="helix" evidence="27">
    <location>
        <begin position="197"/>
        <end position="206"/>
    </location>
</feature>
<feature type="strand" evidence="27">
    <location>
        <begin position="211"/>
        <end position="214"/>
    </location>
</feature>
<feature type="turn" evidence="27">
    <location>
        <begin position="218"/>
        <end position="220"/>
    </location>
</feature>
<feature type="strand" evidence="27">
    <location>
        <begin position="221"/>
        <end position="223"/>
    </location>
</feature>
<feature type="helix" evidence="27">
    <location>
        <begin position="224"/>
        <end position="234"/>
    </location>
</feature>
<feature type="strand" evidence="27">
    <location>
        <begin position="237"/>
        <end position="242"/>
    </location>
</feature>
<feature type="helix" evidence="27">
    <location>
        <begin position="243"/>
        <end position="247"/>
    </location>
</feature>
<feature type="helix" evidence="27">
    <location>
        <begin position="249"/>
        <end position="252"/>
    </location>
</feature>
<feature type="helix" evidence="27">
    <location>
        <begin position="260"/>
        <end position="273"/>
    </location>
</feature>
<feature type="helix" evidence="27">
    <location>
        <begin position="278"/>
        <end position="288"/>
    </location>
</feature>
<feature type="turn" evidence="27">
    <location>
        <begin position="289"/>
        <end position="291"/>
    </location>
</feature>
<feature type="helix" evidence="27">
    <location>
        <begin position="296"/>
        <end position="303"/>
    </location>
</feature>
<feature type="helix" evidence="27">
    <location>
        <begin position="307"/>
        <end position="313"/>
    </location>
</feature>
<feature type="helix" evidence="27">
    <location>
        <begin position="317"/>
        <end position="333"/>
    </location>
</feature>
<feature type="helix" evidence="27">
    <location>
        <begin position="336"/>
        <end position="338"/>
    </location>
</feature>
<feature type="strand" evidence="26">
    <location>
        <begin position="351"/>
        <end position="355"/>
    </location>
</feature>
<feature type="helix" evidence="26">
    <location>
        <begin position="361"/>
        <end position="363"/>
    </location>
</feature>
<feature type="helix" evidence="26">
    <location>
        <begin position="370"/>
        <end position="380"/>
    </location>
</feature>
<feature type="strand" evidence="26">
    <location>
        <begin position="387"/>
        <end position="393"/>
    </location>
</feature>
<feature type="helix" evidence="26">
    <location>
        <begin position="394"/>
        <end position="396"/>
    </location>
</feature>
<feature type="strand" evidence="26">
    <location>
        <begin position="398"/>
        <end position="405"/>
    </location>
</feature>
<feature type="strand" evidence="26">
    <location>
        <begin position="408"/>
        <end position="414"/>
    </location>
</feature>
<feature type="strand" evidence="26">
    <location>
        <begin position="416"/>
        <end position="418"/>
    </location>
</feature>
<feature type="helix" evidence="26">
    <location>
        <begin position="419"/>
        <end position="433"/>
    </location>
</feature>
<evidence type="ECO:0000256" key="1">
    <source>
        <dbReference type="SAM" id="MobiDB-lite"/>
    </source>
</evidence>
<evidence type="ECO:0000269" key="2">
    <source>
    </source>
</evidence>
<evidence type="ECO:0000269" key="3">
    <source>
    </source>
</evidence>
<evidence type="ECO:0000269" key="4">
    <source>
    </source>
</evidence>
<evidence type="ECO:0000269" key="5">
    <source>
    </source>
</evidence>
<evidence type="ECO:0000269" key="6">
    <source>
    </source>
</evidence>
<evidence type="ECO:0000269" key="7">
    <source>
    </source>
</evidence>
<evidence type="ECO:0000269" key="8">
    <source>
    </source>
</evidence>
<evidence type="ECO:0000269" key="9">
    <source>
    </source>
</evidence>
<evidence type="ECO:0000303" key="10">
    <source>
    </source>
</evidence>
<evidence type="ECO:0000305" key="11"/>
<evidence type="ECO:0000305" key="12">
    <source>
    </source>
</evidence>
<evidence type="ECO:0000305" key="13">
    <source>
    </source>
</evidence>
<evidence type="ECO:0007744" key="14">
    <source>
        <dbReference type="PDB" id="4WFS"/>
    </source>
</evidence>
<evidence type="ECO:0007744" key="15">
    <source>
        <dbReference type="PDB" id="4WFT"/>
    </source>
</evidence>
<evidence type="ECO:0007744" key="16">
    <source>
        <dbReference type="PDB" id="4XP7"/>
    </source>
</evidence>
<evidence type="ECO:0007744" key="17">
    <source>
        <dbReference type="PDB" id="5OC4"/>
    </source>
</evidence>
<evidence type="ECO:0007744" key="18">
    <source>
        <dbReference type="PDB" id="5OC5"/>
    </source>
</evidence>
<evidence type="ECO:0007744" key="19">
    <source>
        <dbReference type="PDB" id="5OC6"/>
    </source>
</evidence>
<evidence type="ECO:0007744" key="20">
    <source>
        <dbReference type="PDB" id="6EZA"/>
    </source>
</evidence>
<evidence type="ECO:0007744" key="21">
    <source>
        <dbReference type="PDB" id="6EZB"/>
    </source>
</evidence>
<evidence type="ECO:0007744" key="22">
    <source>
        <dbReference type="PDB" id="6EZC"/>
    </source>
</evidence>
<evidence type="ECO:0007744" key="23">
    <source>
    </source>
</evidence>
<evidence type="ECO:0007744" key="24">
    <source>
    </source>
</evidence>
<evidence type="ECO:0007744" key="25">
    <source>
    </source>
</evidence>
<evidence type="ECO:0007829" key="26">
    <source>
        <dbReference type="PDB" id="4WFT"/>
    </source>
</evidence>
<evidence type="ECO:0007829" key="27">
    <source>
        <dbReference type="PDB" id="4XP7"/>
    </source>
</evidence>
<accession>Q9NX74</accession>
<accession>A8K3G3</accession>
<accession>Q4H4D9</accession>
<keyword id="KW-0002">3D-structure</keyword>
<keyword id="KW-0963">Cytoplasm</keyword>
<keyword id="KW-0256">Endoplasmic reticulum</keyword>
<keyword id="KW-0285">Flavoprotein</keyword>
<keyword id="KW-0288">FMN</keyword>
<keyword id="KW-0521">NADP</keyword>
<keyword id="KW-0560">Oxidoreductase</keyword>
<keyword id="KW-0597">Phosphoprotein</keyword>
<keyword id="KW-1267">Proteomics identification</keyword>
<keyword id="KW-1185">Reference proteome</keyword>
<keyword id="KW-0694">RNA-binding</keyword>
<keyword id="KW-0819">tRNA processing</keyword>
<name>DUS2_HUMAN</name>
<organism>
    <name type="scientific">Homo sapiens</name>
    <name type="common">Human</name>
    <dbReference type="NCBI Taxonomy" id="9606"/>
    <lineage>
        <taxon>Eukaryota</taxon>
        <taxon>Metazoa</taxon>
        <taxon>Chordata</taxon>
        <taxon>Craniata</taxon>
        <taxon>Vertebrata</taxon>
        <taxon>Euteleostomi</taxon>
        <taxon>Mammalia</taxon>
        <taxon>Eutheria</taxon>
        <taxon>Euarchontoglires</taxon>
        <taxon>Primates</taxon>
        <taxon>Haplorrhini</taxon>
        <taxon>Catarrhini</taxon>
        <taxon>Hominidae</taxon>
        <taxon>Homo</taxon>
    </lineage>
</organism>
<protein>
    <recommendedName>
        <fullName>tRNA-dihydrouridine(20) synthase [NAD(P)+]-like</fullName>
        <ecNumber evidence="2 5 6 9 12">1.3.1.91</ecNumber>
    </recommendedName>
    <alternativeName>
        <fullName>Dihydrouridine synthase 2</fullName>
    </alternativeName>
    <alternativeName>
        <fullName>Up-regulated in lung cancer protein 8</fullName>
        <shortName>URLC8</shortName>
    </alternativeName>
    <alternativeName>
        <fullName evidence="10">tRNA-dihydrouridine synthase 2-like</fullName>
        <shortName evidence="10">hDUS2</shortName>
    </alternativeName>
</protein>